<dbReference type="EC" id="5.6.2.4" evidence="1"/>
<dbReference type="EMBL" id="U31787">
    <property type="protein sequence ID" value="AAA79452.1"/>
    <property type="molecule type" value="Genomic_DNA"/>
</dbReference>
<dbReference type="SMR" id="Q80909"/>
<dbReference type="Proteomes" id="UP000009166">
    <property type="component" value="Genome"/>
</dbReference>
<dbReference type="GO" id="GO:0042025">
    <property type="term" value="C:host cell nucleus"/>
    <property type="evidence" value="ECO:0007669"/>
    <property type="project" value="UniProtKB-SubCell"/>
</dbReference>
<dbReference type="GO" id="GO:0005524">
    <property type="term" value="F:ATP binding"/>
    <property type="evidence" value="ECO:0007669"/>
    <property type="project" value="UniProtKB-UniRule"/>
</dbReference>
<dbReference type="GO" id="GO:0016887">
    <property type="term" value="F:ATP hydrolysis activity"/>
    <property type="evidence" value="ECO:0007669"/>
    <property type="project" value="RHEA"/>
</dbReference>
<dbReference type="GO" id="GO:0003677">
    <property type="term" value="F:DNA binding"/>
    <property type="evidence" value="ECO:0007669"/>
    <property type="project" value="UniProtKB-UniRule"/>
</dbReference>
<dbReference type="GO" id="GO:0003678">
    <property type="term" value="F:DNA helicase activity"/>
    <property type="evidence" value="ECO:0007669"/>
    <property type="project" value="UniProtKB-UniRule"/>
</dbReference>
<dbReference type="GO" id="GO:0006260">
    <property type="term" value="P:DNA replication"/>
    <property type="evidence" value="ECO:0007669"/>
    <property type="project" value="UniProtKB-UniRule"/>
</dbReference>
<dbReference type="Gene3D" id="3.40.1310.10">
    <property type="match status" value="1"/>
</dbReference>
<dbReference type="Gene3D" id="3.40.50.300">
    <property type="entry name" value="P-loop containing nucleotide triphosphate hydrolases"/>
    <property type="match status" value="1"/>
</dbReference>
<dbReference type="Gene3D" id="1.10.10.510">
    <property type="entry name" value="Zinc finger, large T-antigen D1 domain"/>
    <property type="match status" value="1"/>
</dbReference>
<dbReference type="HAMAP" id="MF_04000">
    <property type="entry name" value="PPV_E1"/>
    <property type="match status" value="1"/>
</dbReference>
<dbReference type="InterPro" id="IPR014015">
    <property type="entry name" value="Helicase_SF3_DNA-vir"/>
</dbReference>
<dbReference type="InterPro" id="IPR027417">
    <property type="entry name" value="P-loop_NTPase"/>
</dbReference>
<dbReference type="InterPro" id="IPR001177">
    <property type="entry name" value="PPV_DNA_helicase_E1_C"/>
</dbReference>
<dbReference type="InterPro" id="IPR014000">
    <property type="entry name" value="PPV_DNA_helicase_E1_N"/>
</dbReference>
<dbReference type="InterPro" id="IPR046832">
    <property type="entry name" value="PPV_E1_DBD"/>
</dbReference>
<dbReference type="InterPro" id="IPR046935">
    <property type="entry name" value="PPV_E1_DBD_sf"/>
</dbReference>
<dbReference type="InterPro" id="IPR016393">
    <property type="entry name" value="Rep_E1_papillomaV"/>
</dbReference>
<dbReference type="InterPro" id="IPR037102">
    <property type="entry name" value="Znf_lg_T-Ag_D1_dom_sf"/>
</dbReference>
<dbReference type="Pfam" id="PF00519">
    <property type="entry name" value="PPV_E1_C"/>
    <property type="match status" value="1"/>
</dbReference>
<dbReference type="Pfam" id="PF20450">
    <property type="entry name" value="PPV_E1_DBD"/>
    <property type="match status" value="1"/>
</dbReference>
<dbReference type="Pfam" id="PF00524">
    <property type="entry name" value="PPV_E1_N"/>
    <property type="match status" value="1"/>
</dbReference>
<dbReference type="PIRSF" id="PIRSF003383">
    <property type="entry name" value="Rep_E1_papillomaV"/>
    <property type="match status" value="1"/>
</dbReference>
<dbReference type="SUPFAM" id="SSF55464">
    <property type="entry name" value="Origin of replication-binding domain, RBD-like"/>
    <property type="match status" value="1"/>
</dbReference>
<dbReference type="SUPFAM" id="SSF52540">
    <property type="entry name" value="P-loop containing nucleoside triphosphate hydrolases"/>
    <property type="match status" value="1"/>
</dbReference>
<dbReference type="PROSITE" id="PS51206">
    <property type="entry name" value="SF3_HELICASE_1"/>
    <property type="match status" value="1"/>
</dbReference>
<proteinExistence type="inferred from homology"/>
<accession>Q80909</accession>
<organismHost>
    <name type="scientific">Homo sapiens</name>
    <name type="common">Human</name>
    <dbReference type="NCBI Taxonomy" id="9606"/>
</organismHost>
<evidence type="ECO:0000255" key="1">
    <source>
        <dbReference type="HAMAP-Rule" id="MF_04000"/>
    </source>
</evidence>
<gene>
    <name evidence="1" type="primary">E1</name>
</gene>
<comment type="function">
    <text evidence="1">ATP-dependent DNA 3'-5' helicase required for initiation of viral DNA replication. It forms a complex with the viral E2 protein. The E1-E2 complex binds to the replication origin which contains binding sites for both proteins. During the initial step, a dimer of E1 interacts with a dimer of protein E2 leading to a complex that binds the viral origin of replication with high specificity. Then, a second dimer of E1 displaces the E2 dimer in an ATP-dependent manner to form the E1 tetramer. Following this, two E1 monomers are added to each half of the site, which results in the formation of two E1 trimers on the viral ori. Subsequently, two hexamers will be created. The double hexamer acts as a bi-directional helicase machinery and unwinds the viral DNA and then recruits the host DNA polymerase to start replication.</text>
</comment>
<comment type="catalytic activity">
    <reaction evidence="1">
        <text>Couples ATP hydrolysis with the unwinding of duplex DNA by translocating in the 3'-5' direction.</text>
        <dbReference type="EC" id="5.6.2.4"/>
    </reaction>
</comment>
<comment type="catalytic activity">
    <reaction evidence="1">
        <text>ATP + H2O = ADP + phosphate + H(+)</text>
        <dbReference type="Rhea" id="RHEA:13065"/>
        <dbReference type="ChEBI" id="CHEBI:15377"/>
        <dbReference type="ChEBI" id="CHEBI:15378"/>
        <dbReference type="ChEBI" id="CHEBI:30616"/>
        <dbReference type="ChEBI" id="CHEBI:43474"/>
        <dbReference type="ChEBI" id="CHEBI:456216"/>
        <dbReference type="EC" id="5.6.2.4"/>
    </reaction>
</comment>
<comment type="subunit">
    <text evidence="1">Can form hexamers. Interacts with E2 protein; this interaction increases E1 DNA binding specificity. Interacts with host DNA polymerase subunit POLA2. Interacts with host single stranded DNA-binding protein RPA1. Interacts with host TOP1; this interaction stimulates the enzymatic activity of TOP1.</text>
</comment>
<comment type="subcellular location">
    <subcellularLocation>
        <location evidence="1">Host nucleus</location>
    </subcellularLocation>
</comment>
<comment type="PTM">
    <text evidence="1">Phosphorylated.</text>
</comment>
<comment type="PTM">
    <text evidence="1">Sumoylated.</text>
</comment>
<comment type="similarity">
    <text evidence="1">Belongs to the papillomaviridae E1 protein family.</text>
</comment>
<protein>
    <recommendedName>
        <fullName evidence="1">Replication protein E1</fullName>
        <ecNumber evidence="1">5.6.2.4</ecNumber>
    </recommendedName>
    <alternativeName>
        <fullName evidence="1">ATP-dependent helicase E1</fullName>
    </alternativeName>
    <alternativeName>
        <fullName evidence="1">DNA 3'-5' helicase E1</fullName>
    </alternativeName>
</protein>
<organism>
    <name type="scientific">Human papillomavirus 38</name>
    <dbReference type="NCBI Taxonomy" id="37959"/>
    <lineage>
        <taxon>Viruses</taxon>
        <taxon>Monodnaviria</taxon>
        <taxon>Shotokuvirae</taxon>
        <taxon>Cossaviricota</taxon>
        <taxon>Papovaviricetes</taxon>
        <taxon>Zurhausenvirales</taxon>
        <taxon>Papillomaviridae</taxon>
        <taxon>Firstpapillomavirinae</taxon>
        <taxon>Betapapillomavirus</taxon>
        <taxon>Betapapillomavirus 2</taxon>
    </lineage>
</organism>
<reference key="1">
    <citation type="submission" date="1995-10" db="EMBL/GenBank/DDBJ databases">
        <authorList>
            <person name="Delius H."/>
        </authorList>
    </citation>
    <scope>NUCLEOTIDE SEQUENCE [GENOMIC DNA]</scope>
</reference>
<sequence>MADDKGTDPKEGCSDFIYLEAECSDISDLDNDLETLLEEGAGSDISDLINDEVVEQGNSRELLCQQEREESELQVQYLKRKCFSPKAVQELSPRLQSMNISSEHKSKRRLFVEQDSGLELSLNEAEDSTQELEVPASAPAPAAEGDIGLGTVRDLLRSSNSRATLLSKFKDSFGVSFTELTRQYKSNKTCCHHWVLAVYAAKDDLIDASKQLLQQHCFYIWLQSFCPMSLYLCCFNVGKSRDTVVRLIATLLQVHENHILSEPPKNRSIPAALFWYKGSLNSNVFCFGEAPDWILSQTMIQHQTADTLQFDLSRMIQWAYDNDHIDESIIAYQYAKLADIDSNAKAFLAHNSQVKYVKECALMVRYYKRGEMKEMSISAWIHHCISKVEGEGNWQHIVRFIRYQNLNFIMFLDKFRTFLKNLPKKNCLLIYGPPDTGKSMFAMSLIKLLKGSVVSFANSKSQFWLQPLADGKIGLLDDATDVCWQYIDSFLRNGLDGNLVSLDIKHKAPCQMKFPPLIITSNINLLKEERYRFLHSRVTQIDFPNKFPFDSDNKPLFELTDQSWASFFKRLWTQLELSDQEDEGDNGNSQRTFHCTAREVNGHI</sequence>
<name>VE1_HPV38</name>
<keyword id="KW-0067">ATP-binding</keyword>
<keyword id="KW-0235">DNA replication</keyword>
<keyword id="KW-0238">DNA-binding</keyword>
<keyword id="KW-0244">Early protein</keyword>
<keyword id="KW-0347">Helicase</keyword>
<keyword id="KW-1048">Host nucleus</keyword>
<keyword id="KW-0378">Hydrolase</keyword>
<keyword id="KW-0413">Isomerase</keyword>
<keyword id="KW-1017">Isopeptide bond</keyword>
<keyword id="KW-0547">Nucleotide-binding</keyword>
<keyword id="KW-0597">Phosphoprotein</keyword>
<keyword id="KW-0832">Ubl conjugation</keyword>
<feature type="chain" id="PRO_0000133136" description="Replication protein E1">
    <location>
        <begin position="1"/>
        <end position="604"/>
    </location>
</feature>
<feature type="domain" description="SF3 helicase" evidence="1">
    <location>
        <begin position="406"/>
        <end position="556"/>
    </location>
</feature>
<feature type="region of interest" description="DNA-binding region" evidence="1">
    <location>
        <begin position="144"/>
        <end position="307"/>
    </location>
</feature>
<feature type="short sequence motif" description="Nuclear localization signal" evidence="1">
    <location>
        <begin position="79"/>
        <end position="81"/>
    </location>
</feature>
<feature type="binding site" evidence="1">
    <location>
        <begin position="432"/>
        <end position="439"/>
    </location>
    <ligand>
        <name>ATP</name>
        <dbReference type="ChEBI" id="CHEBI:30616"/>
    </ligand>
</feature>
<feature type="modified residue" description="Phosphoserine; by host" evidence="1">
    <location>
        <position position="84"/>
    </location>
</feature>
<feature type="modified residue" description="Phosphoserine; by host" evidence="1">
    <location>
        <position position="92"/>
    </location>
</feature>
<feature type="cross-link" description="Glycyl lysine isopeptide (Lys-Gly) (interchain with G-Cter in SUMO)" evidence="1">
    <location>
        <position position="513"/>
    </location>
</feature>